<protein>
    <recommendedName>
        <fullName evidence="6">m7GpppN-mRNA hydrolase</fullName>
        <ecNumber evidence="5">3.6.1.62</ecNumber>
    </recommendedName>
    <alternativeName>
        <fullName>mRNA-decapping enzyme 2</fullName>
    </alternativeName>
</protein>
<feature type="chain" id="PRO_0000057052" description="m7GpppN-mRNA hydrolase">
    <location>
        <begin position="1"/>
        <end position="422"/>
    </location>
</feature>
<feature type="domain" description="Nudix hydrolase" evidence="3">
    <location>
        <begin position="95"/>
        <end position="226"/>
    </location>
</feature>
<feature type="region of interest" description="Disordered" evidence="4">
    <location>
        <begin position="247"/>
        <end position="347"/>
    </location>
</feature>
<feature type="short sequence motif" description="Nudix box">
    <location>
        <begin position="129"/>
        <end position="150"/>
    </location>
</feature>
<feature type="compositionally biased region" description="Low complexity" evidence="4">
    <location>
        <begin position="249"/>
        <end position="258"/>
    </location>
</feature>
<feature type="compositionally biased region" description="Basic and acidic residues" evidence="4">
    <location>
        <begin position="303"/>
        <end position="312"/>
    </location>
</feature>
<feature type="binding site" evidence="1">
    <location>
        <position position="144"/>
    </location>
    <ligand>
        <name>Mn(2+)</name>
        <dbReference type="ChEBI" id="CHEBI:29035"/>
    </ligand>
</feature>
<feature type="binding site" evidence="1">
    <location>
        <position position="148"/>
    </location>
    <ligand>
        <name>Mn(2+)</name>
        <dbReference type="ChEBI" id="CHEBI:29035"/>
    </ligand>
</feature>
<feature type="modified residue" description="Phosphoserine" evidence="7 8">
    <location>
        <position position="246"/>
    </location>
</feature>
<feature type="modified residue" description="Phosphoserine" evidence="7 8">
    <location>
        <position position="247"/>
    </location>
</feature>
<feature type="modified residue" description="Phosphoserine" evidence="7 8">
    <location>
        <position position="249"/>
    </location>
</feature>
<feature type="modified residue" description="Phosphoserine" evidence="2">
    <location>
        <position position="276"/>
    </location>
</feature>
<feature type="modified residue" description="Phosphoserine" evidence="2">
    <location>
        <position position="284"/>
    </location>
</feature>
<feature type="sequence conflict" description="In Ref. 1; BAB30946." evidence="6" ref="1">
    <original>F</original>
    <variation>Y</variation>
    <location>
        <position position="226"/>
    </location>
</feature>
<sequence length="422" mass="48380">MEPKRLEIPGSVLDDLCSRFILHIPSEERDNAIRVCFQIELAHWFYLDFYMQNTPGLPQCGIRDFAKAVFSHCPFLLPQGEDVEKILDEWKEYKMGVPTYGAIILDETLENVLLVQGYLAKSGWGFPKGKVNKEEAPHDCAAREVFEETGFDIKDYICKDDYIELRINDQLARLYIIPGVPKDTKFNPKTRREIRNIEWFSIEKLPCHRNDMTPKSKLGLAPNKFFMAIPFIRPLRDWLSRRFGDSSDSDNGFSSAGSTPARPTVEKLSRTKFRHSQQLFPEGSPSDQWVKHRQPLQQKSHSNHGEVSDLLKAKNQNMRGNGRKQYQDSPNQKKRANGVHGQPAKQQNPLVKCEKKLHPRKLQDNFETDATCDLPCSGEEPSVEHAEGHSVACNGHCKFPFSSRAFLSFKFDQNAIMKILDL</sequence>
<accession>Q9CYC6</accession>
<accession>Q3TLD9</accession>
<name>DCP2_MOUSE</name>
<gene>
    <name type="primary">Dcp2</name>
</gene>
<comment type="function">
    <text evidence="2 5">Decapping metalloenzyme that catalyzes the cleavage of the cap structure on mRNAs (PubMed:21070968). Removes the 7-methyl guanine cap structure from mRNA molecules, yielding a 5'-phosphorylated mRNA fragment and 7m-GDP (PubMed:21070968). Necessary for the degradation of mRNAs, both in normal mRNA turnover and in nonsense-mediated mRNA decay (By similarity). Plays a role in replication-dependent histone mRNA degradation. Has higher activity towards mRNAs that lack a poly(A) tail (PubMed:21070968). Has no activity towards a cap structure lacking an RNA moiety (PubMed:21070968). The presence of a N(6)-methyladenosine methylation at the second transcribed position of mRNAs (N(6),2'-O-dimethyladenosine cap; m6A(m)) provides resistance to DCP2-mediated decapping (By similarity). Blocks autophagy in nutrient-rich conditions by repressing the expression of ATG-related genes through degradation of their transcripts (By similarity).</text>
</comment>
<comment type="catalytic activity">
    <reaction evidence="5">
        <text>a 5'-end (N(7)-methyl 5'-triphosphoguanosine)-ribonucleoside in mRNA + H2O = N(7)-methyl-GDP + a 5'-end phospho-ribonucleoside in mRNA + 2 H(+)</text>
        <dbReference type="Rhea" id="RHEA:67484"/>
        <dbReference type="Rhea" id="RHEA-COMP:15692"/>
        <dbReference type="Rhea" id="RHEA-COMP:17167"/>
        <dbReference type="ChEBI" id="CHEBI:15377"/>
        <dbReference type="ChEBI" id="CHEBI:15378"/>
        <dbReference type="ChEBI" id="CHEBI:63714"/>
        <dbReference type="ChEBI" id="CHEBI:138282"/>
        <dbReference type="ChEBI" id="CHEBI:156461"/>
        <dbReference type="EC" id="3.6.1.62"/>
    </reaction>
    <physiologicalReaction direction="left-to-right" evidence="5">
        <dbReference type="Rhea" id="RHEA:67485"/>
    </physiologicalReaction>
</comment>
<comment type="cofactor">
    <cofactor evidence="2">
        <name>Mn(2+)</name>
        <dbReference type="ChEBI" id="CHEBI:29035"/>
    </cofactor>
    <cofactor evidence="2">
        <name>Mg(2+)</name>
        <dbReference type="ChEBI" id="CHEBI:18420"/>
    </cofactor>
    <text evidence="2">Mn(2+) ion is required for highest activity. Can also utilize magnesium ions.</text>
</comment>
<comment type="subunit">
    <text evidence="2">Found in a mRNA decay complex with LSM1, LSM3, LSM4, EXOSC2, EXOSC4, EXOSC10, PARN, XRN1, CNOT6, UPF1, UPF2 and UPF3B. Forms a complex with DCP1A, EDC3, DDX6 and EDC4/HEDLS, within this complex directly interacts with EDC4/HEDLS. Interacts with DPC1B, UPF1, UPF2 and UPF3B. Associates with polysomes. Interacts (via N-terminus and C-terminus) with TRIM21 (via N-terminus and C-terminus). Interacts with LIMD1, WTIP and AJUBA. Interacts with DDX17 in an RNA-dependent manner. Interacts with ZC3HAV1. Interacts with APOBEC3G in an RNA-dependent manner. Interacts with ZFP36L1 (via N-terminus). Interacts with NBDY.</text>
</comment>
<comment type="subcellular location">
    <subcellularLocation>
        <location evidence="2">Cytoplasm</location>
        <location evidence="2">P-body</location>
    </subcellularLocation>
    <subcellularLocation>
        <location evidence="2">Nucleus</location>
    </subcellularLocation>
    <text evidence="2">Predominantly cytoplasmic, in processing bodies (PB) (By similarity). A minor amount is nuclear (By similarity).</text>
</comment>
<comment type="tissue specificity">
    <text evidence="5">Strongly expressed in brain and testis. Weakly expressed in lung. Not detected in heart, liver, kidney and muscle (at protein level).</text>
</comment>
<comment type="developmental stage">
    <text evidence="5">Strongly expressed in brain, heart, liver at 14.5 and 16.5 dpc. Strongly expressed in brain at 20 dpc. Weakly expressed in heart and liver at 20 dpc (at protein level).</text>
</comment>
<comment type="similarity">
    <text evidence="6">Belongs to the Nudix hydrolase family. DCP2 subfamily.</text>
</comment>
<keyword id="KW-0963">Cytoplasm</keyword>
<keyword id="KW-0378">Hydrolase</keyword>
<keyword id="KW-0464">Manganese</keyword>
<keyword id="KW-0479">Metal-binding</keyword>
<keyword id="KW-0866">Nonsense-mediated mRNA decay</keyword>
<keyword id="KW-0539">Nucleus</keyword>
<keyword id="KW-0597">Phosphoprotein</keyword>
<keyword id="KW-1185">Reference proteome</keyword>
<keyword id="KW-0694">RNA-binding</keyword>
<evidence type="ECO:0000250" key="1"/>
<evidence type="ECO:0000250" key="2">
    <source>
        <dbReference type="UniProtKB" id="Q8IU60"/>
    </source>
</evidence>
<evidence type="ECO:0000255" key="3">
    <source>
        <dbReference type="PROSITE-ProRule" id="PRU00794"/>
    </source>
</evidence>
<evidence type="ECO:0000256" key="4">
    <source>
        <dbReference type="SAM" id="MobiDB-lite"/>
    </source>
</evidence>
<evidence type="ECO:0000269" key="5">
    <source>
    </source>
</evidence>
<evidence type="ECO:0000305" key="6"/>
<evidence type="ECO:0007744" key="7">
    <source>
    </source>
</evidence>
<evidence type="ECO:0007744" key="8">
    <source>
    </source>
</evidence>
<organism>
    <name type="scientific">Mus musculus</name>
    <name type="common">Mouse</name>
    <dbReference type="NCBI Taxonomy" id="10090"/>
    <lineage>
        <taxon>Eukaryota</taxon>
        <taxon>Metazoa</taxon>
        <taxon>Chordata</taxon>
        <taxon>Craniata</taxon>
        <taxon>Vertebrata</taxon>
        <taxon>Euteleostomi</taxon>
        <taxon>Mammalia</taxon>
        <taxon>Eutheria</taxon>
        <taxon>Euarchontoglires</taxon>
        <taxon>Glires</taxon>
        <taxon>Rodentia</taxon>
        <taxon>Myomorpha</taxon>
        <taxon>Muroidea</taxon>
        <taxon>Muridae</taxon>
        <taxon>Murinae</taxon>
        <taxon>Mus</taxon>
        <taxon>Mus</taxon>
    </lineage>
</organism>
<dbReference type="EC" id="3.6.1.62" evidence="5"/>
<dbReference type="EMBL" id="AK017809">
    <property type="protein sequence ID" value="BAB30946.1"/>
    <property type="molecule type" value="mRNA"/>
</dbReference>
<dbReference type="EMBL" id="AK166560">
    <property type="protein sequence ID" value="BAE38853.1"/>
    <property type="molecule type" value="mRNA"/>
</dbReference>
<dbReference type="CCDS" id="CCDS50275.1"/>
<dbReference type="RefSeq" id="NP_081766.1">
    <property type="nucleotide sequence ID" value="NM_027490.1"/>
</dbReference>
<dbReference type="SMR" id="Q9CYC6"/>
<dbReference type="FunCoup" id="Q9CYC6">
    <property type="interactions" value="2377"/>
</dbReference>
<dbReference type="STRING" id="10090.ENSMUSP00000025350"/>
<dbReference type="GlyGen" id="Q9CYC6">
    <property type="glycosylation" value="1 site"/>
</dbReference>
<dbReference type="iPTMnet" id="Q9CYC6"/>
<dbReference type="PhosphoSitePlus" id="Q9CYC6"/>
<dbReference type="PaxDb" id="10090-ENSMUSP00000025350"/>
<dbReference type="ProteomicsDB" id="279392"/>
<dbReference type="Pumba" id="Q9CYC6"/>
<dbReference type="Antibodypedia" id="25376">
    <property type="antibodies" value="221 antibodies from 28 providers"/>
</dbReference>
<dbReference type="Ensembl" id="ENSMUST00000025350.10">
    <property type="protein sequence ID" value="ENSMUSP00000025350.9"/>
    <property type="gene ID" value="ENSMUSG00000024472.10"/>
</dbReference>
<dbReference type="GeneID" id="70640"/>
<dbReference type="KEGG" id="mmu:70640"/>
<dbReference type="UCSC" id="uc008eux.2">
    <property type="organism name" value="mouse"/>
</dbReference>
<dbReference type="AGR" id="MGI:1917890"/>
<dbReference type="CTD" id="167227"/>
<dbReference type="MGI" id="MGI:1917890">
    <property type="gene designation" value="Dcp2"/>
</dbReference>
<dbReference type="VEuPathDB" id="HostDB:ENSMUSG00000024472"/>
<dbReference type="eggNOG" id="KOG2937">
    <property type="taxonomic scope" value="Eukaryota"/>
</dbReference>
<dbReference type="GeneTree" id="ENSGT00390000018878"/>
<dbReference type="HOGENOM" id="CLU_008108_0_0_1"/>
<dbReference type="InParanoid" id="Q9CYC6"/>
<dbReference type="OMA" id="YICKEDY"/>
<dbReference type="OrthoDB" id="18996at2759"/>
<dbReference type="PhylomeDB" id="Q9CYC6"/>
<dbReference type="TreeFam" id="TF314180"/>
<dbReference type="BRENDA" id="3.6.1.62">
    <property type="organism ID" value="3474"/>
</dbReference>
<dbReference type="Reactome" id="R-MMU-430039">
    <property type="pathway name" value="mRNA decay by 5' to 3' exoribonuclease"/>
</dbReference>
<dbReference type="Reactome" id="R-MMU-450385">
    <property type="pathway name" value="Butyrate Response Factor 1 (BRF1) binds and destabilizes mRNA"/>
</dbReference>
<dbReference type="Reactome" id="R-MMU-450513">
    <property type="pathway name" value="Tristetraprolin (TTP, ZFP36) binds and destabilizes mRNA"/>
</dbReference>
<dbReference type="Reactome" id="R-MMU-450604">
    <property type="pathway name" value="KSRP (KHSRP) binds and destabilizes mRNA"/>
</dbReference>
<dbReference type="BioGRID-ORCS" id="70640">
    <property type="hits" value="17 hits in 78 CRISPR screens"/>
</dbReference>
<dbReference type="ChiTaRS" id="Dcp2">
    <property type="organism name" value="mouse"/>
</dbReference>
<dbReference type="PRO" id="PR:Q9CYC6"/>
<dbReference type="Proteomes" id="UP000000589">
    <property type="component" value="Chromosome 18"/>
</dbReference>
<dbReference type="RNAct" id="Q9CYC6">
    <property type="molecule type" value="protein"/>
</dbReference>
<dbReference type="Bgee" id="ENSMUSG00000024472">
    <property type="expression patterns" value="Expressed in metanephric mesenchyme and 227 other cell types or tissues"/>
</dbReference>
<dbReference type="ExpressionAtlas" id="Q9CYC6">
    <property type="expression patterns" value="baseline and differential"/>
</dbReference>
<dbReference type="GO" id="GO:0030054">
    <property type="term" value="C:cell junction"/>
    <property type="evidence" value="ECO:0007669"/>
    <property type="project" value="Ensembl"/>
</dbReference>
<dbReference type="GO" id="GO:0005654">
    <property type="term" value="C:nucleoplasm"/>
    <property type="evidence" value="ECO:0007669"/>
    <property type="project" value="Ensembl"/>
</dbReference>
<dbReference type="GO" id="GO:0000932">
    <property type="term" value="C:P-body"/>
    <property type="evidence" value="ECO:0000266"/>
    <property type="project" value="MGI"/>
</dbReference>
<dbReference type="GO" id="GO:0016442">
    <property type="term" value="C:RISC complex"/>
    <property type="evidence" value="ECO:0000266"/>
    <property type="project" value="MGI"/>
</dbReference>
<dbReference type="GO" id="GO:0140933">
    <property type="term" value="F:5'-(N(7)-methylguanosine 5'-triphospho)-[mRNA] hydrolase activity"/>
    <property type="evidence" value="ECO:0000250"/>
    <property type="project" value="UniProtKB"/>
</dbReference>
<dbReference type="GO" id="GO:0004534">
    <property type="term" value="F:5'-3' RNA exonuclease activity"/>
    <property type="evidence" value="ECO:0007669"/>
    <property type="project" value="Ensembl"/>
</dbReference>
<dbReference type="GO" id="GO:0030145">
    <property type="term" value="F:manganese ion binding"/>
    <property type="evidence" value="ECO:0007669"/>
    <property type="project" value="InterPro"/>
</dbReference>
<dbReference type="GO" id="GO:0070034">
    <property type="term" value="F:telomerase RNA binding"/>
    <property type="evidence" value="ECO:0007669"/>
    <property type="project" value="Ensembl"/>
</dbReference>
<dbReference type="GO" id="GO:0000290">
    <property type="term" value="P:deadenylation-dependent decapping of nuclear-transcribed mRNA"/>
    <property type="evidence" value="ECO:0007669"/>
    <property type="project" value="InterPro"/>
</dbReference>
<dbReference type="GO" id="GO:0071044">
    <property type="term" value="P:histone mRNA catabolic process"/>
    <property type="evidence" value="ECO:0000250"/>
    <property type="project" value="UniProtKB"/>
</dbReference>
<dbReference type="GO" id="GO:0006402">
    <property type="term" value="P:mRNA catabolic process"/>
    <property type="evidence" value="ECO:0000315"/>
    <property type="project" value="UniProtKB"/>
</dbReference>
<dbReference type="GO" id="GO:0032211">
    <property type="term" value="P:negative regulation of telomere maintenance via telomerase"/>
    <property type="evidence" value="ECO:0007669"/>
    <property type="project" value="Ensembl"/>
</dbReference>
<dbReference type="GO" id="GO:0000184">
    <property type="term" value="P:nuclear-transcribed mRNA catabolic process, nonsense-mediated decay"/>
    <property type="evidence" value="ECO:0007669"/>
    <property type="project" value="UniProtKB-KW"/>
</dbReference>
<dbReference type="GO" id="GO:0043488">
    <property type="term" value="P:regulation of mRNA stability"/>
    <property type="evidence" value="ECO:0000250"/>
    <property type="project" value="UniProtKB"/>
</dbReference>
<dbReference type="GO" id="GO:1904872">
    <property type="term" value="P:regulation of telomerase RNA localization to Cajal body"/>
    <property type="evidence" value="ECO:0007669"/>
    <property type="project" value="Ensembl"/>
</dbReference>
<dbReference type="CDD" id="cd03672">
    <property type="entry name" value="NUDIX_Dcp2p_Nudt20"/>
    <property type="match status" value="1"/>
</dbReference>
<dbReference type="FunFam" id="1.10.10.1050:FF:000001">
    <property type="entry name" value="M7GpppN-mRNA hydrolase isoform 2"/>
    <property type="match status" value="1"/>
</dbReference>
<dbReference type="FunFam" id="3.90.79.10:FF:000003">
    <property type="entry name" value="M7GpppN-mRNA hydrolase isoform 2"/>
    <property type="match status" value="1"/>
</dbReference>
<dbReference type="Gene3D" id="1.10.10.1050">
    <property type="entry name" value="Dcp2, box A domain"/>
    <property type="match status" value="1"/>
</dbReference>
<dbReference type="Gene3D" id="3.90.79.10">
    <property type="entry name" value="Nucleoside Triphosphate Pyrophosphohydrolase"/>
    <property type="match status" value="1"/>
</dbReference>
<dbReference type="InterPro" id="IPR007722">
    <property type="entry name" value="DCP2_BoxA"/>
</dbReference>
<dbReference type="InterPro" id="IPR036189">
    <property type="entry name" value="DCP2_BoxA_sf"/>
</dbReference>
<dbReference type="InterPro" id="IPR044099">
    <property type="entry name" value="Dcp2_NUDIX"/>
</dbReference>
<dbReference type="InterPro" id="IPR015797">
    <property type="entry name" value="NUDIX_hydrolase-like_dom_sf"/>
</dbReference>
<dbReference type="InterPro" id="IPR020084">
    <property type="entry name" value="NUDIX_hydrolase_CS"/>
</dbReference>
<dbReference type="InterPro" id="IPR000086">
    <property type="entry name" value="NUDIX_hydrolase_dom"/>
</dbReference>
<dbReference type="PANTHER" id="PTHR23114">
    <property type="entry name" value="M7GPPPN-MRNA HYDROLASE"/>
    <property type="match status" value="1"/>
</dbReference>
<dbReference type="PANTHER" id="PTHR23114:SF17">
    <property type="entry name" value="M7GPPPN-MRNA HYDROLASE"/>
    <property type="match status" value="1"/>
</dbReference>
<dbReference type="Pfam" id="PF05026">
    <property type="entry name" value="DCP2"/>
    <property type="match status" value="1"/>
</dbReference>
<dbReference type="Pfam" id="PF00293">
    <property type="entry name" value="NUDIX"/>
    <property type="match status" value="1"/>
</dbReference>
<dbReference type="SMART" id="SM01125">
    <property type="entry name" value="DCP2"/>
    <property type="match status" value="1"/>
</dbReference>
<dbReference type="SUPFAM" id="SSF140586">
    <property type="entry name" value="Dcp2 domain-like"/>
    <property type="match status" value="1"/>
</dbReference>
<dbReference type="SUPFAM" id="SSF55811">
    <property type="entry name" value="Nudix"/>
    <property type="match status" value="1"/>
</dbReference>
<dbReference type="PROSITE" id="PS51462">
    <property type="entry name" value="NUDIX"/>
    <property type="match status" value="1"/>
</dbReference>
<dbReference type="PROSITE" id="PS00893">
    <property type="entry name" value="NUDIX_BOX"/>
    <property type="match status" value="1"/>
</dbReference>
<proteinExistence type="evidence at protein level"/>
<reference key="1">
    <citation type="journal article" date="2005" name="Science">
        <title>The transcriptional landscape of the mammalian genome.</title>
        <authorList>
            <person name="Carninci P."/>
            <person name="Kasukawa T."/>
            <person name="Katayama S."/>
            <person name="Gough J."/>
            <person name="Frith M.C."/>
            <person name="Maeda N."/>
            <person name="Oyama R."/>
            <person name="Ravasi T."/>
            <person name="Lenhard B."/>
            <person name="Wells C."/>
            <person name="Kodzius R."/>
            <person name="Shimokawa K."/>
            <person name="Bajic V.B."/>
            <person name="Brenner S.E."/>
            <person name="Batalov S."/>
            <person name="Forrest A.R."/>
            <person name="Zavolan M."/>
            <person name="Davis M.J."/>
            <person name="Wilming L.G."/>
            <person name="Aidinis V."/>
            <person name="Allen J.E."/>
            <person name="Ambesi-Impiombato A."/>
            <person name="Apweiler R."/>
            <person name="Aturaliya R.N."/>
            <person name="Bailey T.L."/>
            <person name="Bansal M."/>
            <person name="Baxter L."/>
            <person name="Beisel K.W."/>
            <person name="Bersano T."/>
            <person name="Bono H."/>
            <person name="Chalk A.M."/>
            <person name="Chiu K.P."/>
            <person name="Choudhary V."/>
            <person name="Christoffels A."/>
            <person name="Clutterbuck D.R."/>
            <person name="Crowe M.L."/>
            <person name="Dalla E."/>
            <person name="Dalrymple B.P."/>
            <person name="de Bono B."/>
            <person name="Della Gatta G."/>
            <person name="di Bernardo D."/>
            <person name="Down T."/>
            <person name="Engstrom P."/>
            <person name="Fagiolini M."/>
            <person name="Faulkner G."/>
            <person name="Fletcher C.F."/>
            <person name="Fukushima T."/>
            <person name="Furuno M."/>
            <person name="Futaki S."/>
            <person name="Gariboldi M."/>
            <person name="Georgii-Hemming P."/>
            <person name="Gingeras T.R."/>
            <person name="Gojobori T."/>
            <person name="Green R.E."/>
            <person name="Gustincich S."/>
            <person name="Harbers M."/>
            <person name="Hayashi Y."/>
            <person name="Hensch T.K."/>
            <person name="Hirokawa N."/>
            <person name="Hill D."/>
            <person name="Huminiecki L."/>
            <person name="Iacono M."/>
            <person name="Ikeo K."/>
            <person name="Iwama A."/>
            <person name="Ishikawa T."/>
            <person name="Jakt M."/>
            <person name="Kanapin A."/>
            <person name="Katoh M."/>
            <person name="Kawasawa Y."/>
            <person name="Kelso J."/>
            <person name="Kitamura H."/>
            <person name="Kitano H."/>
            <person name="Kollias G."/>
            <person name="Krishnan S.P."/>
            <person name="Kruger A."/>
            <person name="Kummerfeld S.K."/>
            <person name="Kurochkin I.V."/>
            <person name="Lareau L.F."/>
            <person name="Lazarevic D."/>
            <person name="Lipovich L."/>
            <person name="Liu J."/>
            <person name="Liuni S."/>
            <person name="McWilliam S."/>
            <person name="Madan Babu M."/>
            <person name="Madera M."/>
            <person name="Marchionni L."/>
            <person name="Matsuda H."/>
            <person name="Matsuzawa S."/>
            <person name="Miki H."/>
            <person name="Mignone F."/>
            <person name="Miyake S."/>
            <person name="Morris K."/>
            <person name="Mottagui-Tabar S."/>
            <person name="Mulder N."/>
            <person name="Nakano N."/>
            <person name="Nakauchi H."/>
            <person name="Ng P."/>
            <person name="Nilsson R."/>
            <person name="Nishiguchi S."/>
            <person name="Nishikawa S."/>
            <person name="Nori F."/>
            <person name="Ohara O."/>
            <person name="Okazaki Y."/>
            <person name="Orlando V."/>
            <person name="Pang K.C."/>
            <person name="Pavan W.J."/>
            <person name="Pavesi G."/>
            <person name="Pesole G."/>
            <person name="Petrovsky N."/>
            <person name="Piazza S."/>
            <person name="Reed J."/>
            <person name="Reid J.F."/>
            <person name="Ring B.Z."/>
            <person name="Ringwald M."/>
            <person name="Rost B."/>
            <person name="Ruan Y."/>
            <person name="Salzberg S.L."/>
            <person name="Sandelin A."/>
            <person name="Schneider C."/>
            <person name="Schoenbach C."/>
            <person name="Sekiguchi K."/>
            <person name="Semple C.A."/>
            <person name="Seno S."/>
            <person name="Sessa L."/>
            <person name="Sheng Y."/>
            <person name="Shibata Y."/>
            <person name="Shimada H."/>
            <person name="Shimada K."/>
            <person name="Silva D."/>
            <person name="Sinclair B."/>
            <person name="Sperling S."/>
            <person name="Stupka E."/>
            <person name="Sugiura K."/>
            <person name="Sultana R."/>
            <person name="Takenaka Y."/>
            <person name="Taki K."/>
            <person name="Tammoja K."/>
            <person name="Tan S.L."/>
            <person name="Tang S."/>
            <person name="Taylor M.S."/>
            <person name="Tegner J."/>
            <person name="Teichmann S.A."/>
            <person name="Ueda H.R."/>
            <person name="van Nimwegen E."/>
            <person name="Verardo R."/>
            <person name="Wei C.L."/>
            <person name="Yagi K."/>
            <person name="Yamanishi H."/>
            <person name="Zabarovsky E."/>
            <person name="Zhu S."/>
            <person name="Zimmer A."/>
            <person name="Hide W."/>
            <person name="Bult C."/>
            <person name="Grimmond S.M."/>
            <person name="Teasdale R.D."/>
            <person name="Liu E.T."/>
            <person name="Brusic V."/>
            <person name="Quackenbush J."/>
            <person name="Wahlestedt C."/>
            <person name="Mattick J.S."/>
            <person name="Hume D.A."/>
            <person name="Kai C."/>
            <person name="Sasaki D."/>
            <person name="Tomaru Y."/>
            <person name="Fukuda S."/>
            <person name="Kanamori-Katayama M."/>
            <person name="Suzuki M."/>
            <person name="Aoki J."/>
            <person name="Arakawa T."/>
            <person name="Iida J."/>
            <person name="Imamura K."/>
            <person name="Itoh M."/>
            <person name="Kato T."/>
            <person name="Kawaji H."/>
            <person name="Kawagashira N."/>
            <person name="Kawashima T."/>
            <person name="Kojima M."/>
            <person name="Kondo S."/>
            <person name="Konno H."/>
            <person name="Nakano K."/>
            <person name="Ninomiya N."/>
            <person name="Nishio T."/>
            <person name="Okada M."/>
            <person name="Plessy C."/>
            <person name="Shibata K."/>
            <person name="Shiraki T."/>
            <person name="Suzuki S."/>
            <person name="Tagami M."/>
            <person name="Waki K."/>
            <person name="Watahiki A."/>
            <person name="Okamura-Oho Y."/>
            <person name="Suzuki H."/>
            <person name="Kawai J."/>
            <person name="Hayashizaki Y."/>
        </authorList>
    </citation>
    <scope>NUCLEOTIDE SEQUENCE [LARGE SCALE MRNA]</scope>
    <source>
        <strain>C57BL/6J</strain>
        <tissue>Embryo</tissue>
    </source>
</reference>
<reference key="2">
    <citation type="journal article" date="2007" name="Proc. Natl. Acad. Sci. U.S.A.">
        <title>Large-scale phosphorylation analysis of mouse liver.</title>
        <authorList>
            <person name="Villen J."/>
            <person name="Beausoleil S.A."/>
            <person name="Gerber S.A."/>
            <person name="Gygi S.P."/>
        </authorList>
    </citation>
    <scope>PHOSPHORYLATION [LARGE SCALE ANALYSIS] AT SER-246; SER-247 AND SER-249</scope>
    <scope>IDENTIFICATION BY MASS SPECTROMETRY [LARGE SCALE ANALYSIS]</scope>
    <source>
        <tissue>Liver</tissue>
    </source>
</reference>
<reference key="3">
    <citation type="journal article" date="2010" name="Cell">
        <title>A tissue-specific atlas of mouse protein phosphorylation and expression.</title>
        <authorList>
            <person name="Huttlin E.L."/>
            <person name="Jedrychowski M.P."/>
            <person name="Elias J.E."/>
            <person name="Goswami T."/>
            <person name="Rad R."/>
            <person name="Beausoleil S.A."/>
            <person name="Villen J."/>
            <person name="Haas W."/>
            <person name="Sowa M.E."/>
            <person name="Gygi S.P."/>
        </authorList>
    </citation>
    <scope>PHOSPHORYLATION [LARGE SCALE ANALYSIS] AT SER-246; SER-247 AND SER-249</scope>
    <scope>IDENTIFICATION BY MASS SPECTROMETRY [LARGE SCALE ANALYSIS]</scope>
    <source>
        <tissue>Brain</tissue>
        <tissue>Testis</tissue>
    </source>
</reference>
<reference key="4">
    <citation type="journal article" date="2010" name="Mol. Cell">
        <title>Multiple mRNA decapping enzymes in mammalian cells.</title>
        <authorList>
            <person name="Song M.G."/>
            <person name="Li Y."/>
            <person name="Kiledjian M."/>
        </authorList>
    </citation>
    <scope>FUNCTION AS A DECAPPING ENZYME</scope>
    <scope>TISSUE SPECIFICITY</scope>
    <scope>DEVELOPMENTAL STAGE</scope>
</reference>